<protein>
    <recommendedName>
        <fullName>Target of rapamycin complex 1 subunit TCO89</fullName>
        <shortName>TORC1 subunit TCO89</shortName>
    </recommendedName>
    <alternativeName>
        <fullName>89 kDa TOR complex 1 protein</fullName>
    </alternativeName>
</protein>
<dbReference type="EMBL" id="Z73536">
    <property type="protein sequence ID" value="CAA97887.1"/>
    <property type="molecule type" value="Genomic_DNA"/>
</dbReference>
<dbReference type="EMBL" id="BK006949">
    <property type="protein sequence ID" value="DAA11254.1"/>
    <property type="molecule type" value="Genomic_DNA"/>
</dbReference>
<dbReference type="PIR" id="S65192">
    <property type="entry name" value="S65192"/>
</dbReference>
<dbReference type="RefSeq" id="NP_015145.1">
    <property type="nucleotide sequence ID" value="NM_001183994.1"/>
</dbReference>
<dbReference type="SMR" id="Q08921"/>
<dbReference type="BioGRID" id="36002">
    <property type="interactions" value="227"/>
</dbReference>
<dbReference type="ComplexPortal" id="CPX-1715">
    <property type="entry name" value="TORC1 serine/threonine-protein kinase complex, TOR1 variant"/>
</dbReference>
<dbReference type="ComplexPortal" id="CPX-1716">
    <property type="entry name" value="TORC1 serine/threonine-protein kinase complex, TOR2 variant"/>
</dbReference>
<dbReference type="DIP" id="DIP-5347N"/>
<dbReference type="FunCoup" id="Q08921">
    <property type="interactions" value="212"/>
</dbReference>
<dbReference type="IntAct" id="Q08921">
    <property type="interactions" value="37"/>
</dbReference>
<dbReference type="MINT" id="Q08921"/>
<dbReference type="STRING" id="4932.YPL180W"/>
<dbReference type="GlyGen" id="Q08921">
    <property type="glycosylation" value="2 sites, 1 O-linked glycan (2 sites)"/>
</dbReference>
<dbReference type="iPTMnet" id="Q08921"/>
<dbReference type="PaxDb" id="4932-YPL180W"/>
<dbReference type="PeptideAtlas" id="Q08921"/>
<dbReference type="EnsemblFungi" id="YPL180W_mRNA">
    <property type="protein sequence ID" value="YPL180W"/>
    <property type="gene ID" value="YPL180W"/>
</dbReference>
<dbReference type="GeneID" id="855922"/>
<dbReference type="KEGG" id="sce:YPL180W"/>
<dbReference type="AGR" id="SGD:S000006101"/>
<dbReference type="SGD" id="S000006101">
    <property type="gene designation" value="TCO89"/>
</dbReference>
<dbReference type="VEuPathDB" id="FungiDB:YPL180W"/>
<dbReference type="eggNOG" id="ENOG502QR2V">
    <property type="taxonomic scope" value="Eukaryota"/>
</dbReference>
<dbReference type="HOGENOM" id="CLU_023420_0_0_1"/>
<dbReference type="InParanoid" id="Q08921"/>
<dbReference type="OMA" id="RISHEYT"/>
<dbReference type="OrthoDB" id="5430106at2759"/>
<dbReference type="BioCyc" id="YEAST:G3O-34075-MONOMER"/>
<dbReference type="BioGRID-ORCS" id="855922">
    <property type="hits" value="1 hit in 10 CRISPR screens"/>
</dbReference>
<dbReference type="PRO" id="PR:Q08921"/>
<dbReference type="Proteomes" id="UP000002311">
    <property type="component" value="Chromosome XVI"/>
</dbReference>
<dbReference type="RNAct" id="Q08921">
    <property type="molecule type" value="protein"/>
</dbReference>
<dbReference type="GO" id="GO:0000329">
    <property type="term" value="C:fungal-type vacuole membrane"/>
    <property type="evidence" value="ECO:0000314"/>
    <property type="project" value="SGD"/>
</dbReference>
<dbReference type="GO" id="GO:0005886">
    <property type="term" value="C:plasma membrane"/>
    <property type="evidence" value="ECO:0007669"/>
    <property type="project" value="UniProtKB-SubCell"/>
</dbReference>
<dbReference type="GO" id="GO:0031931">
    <property type="term" value="C:TORC1 complex"/>
    <property type="evidence" value="ECO:0000353"/>
    <property type="project" value="ComplexPortal"/>
</dbReference>
<dbReference type="GO" id="GO:0031505">
    <property type="term" value="P:fungal-type cell wall organization"/>
    <property type="evidence" value="ECO:0000315"/>
    <property type="project" value="SGD"/>
</dbReference>
<dbReference type="GO" id="GO:0006071">
    <property type="term" value="P:glycerol metabolic process"/>
    <property type="evidence" value="ECO:0000315"/>
    <property type="project" value="SGD"/>
</dbReference>
<dbReference type="GO" id="GO:0051726">
    <property type="term" value="P:regulation of cell cycle"/>
    <property type="evidence" value="ECO:0000303"/>
    <property type="project" value="ComplexPortal"/>
</dbReference>
<dbReference type="GO" id="GO:0001558">
    <property type="term" value="P:regulation of cell growth"/>
    <property type="evidence" value="ECO:0000353"/>
    <property type="project" value="SGD"/>
</dbReference>
<dbReference type="GO" id="GO:0007584">
    <property type="term" value="P:response to nutrient"/>
    <property type="evidence" value="ECO:0000303"/>
    <property type="project" value="ComplexPortal"/>
</dbReference>
<dbReference type="GO" id="GO:0009651">
    <property type="term" value="P:response to salt stress"/>
    <property type="evidence" value="ECO:0000315"/>
    <property type="project" value="SGD"/>
</dbReference>
<dbReference type="GO" id="GO:0031929">
    <property type="term" value="P:TOR signaling"/>
    <property type="evidence" value="ECO:0000303"/>
    <property type="project" value="ComplexPortal"/>
</dbReference>
<dbReference type="InterPro" id="IPR018857">
    <property type="entry name" value="TORC1_cplx_su_TCO89"/>
</dbReference>
<dbReference type="PANTHER" id="PTHR22794">
    <property type="entry name" value="THAP DOMAIN PROTEIN 11"/>
    <property type="match status" value="1"/>
</dbReference>
<dbReference type="PANTHER" id="PTHR22794:SF2">
    <property type="entry name" value="THAP DOMAIN-CONTAINING PROTEIN 11"/>
    <property type="match status" value="1"/>
</dbReference>
<dbReference type="Pfam" id="PF10452">
    <property type="entry name" value="TCO89"/>
    <property type="match status" value="1"/>
</dbReference>
<keyword id="KW-1003">Cell membrane</keyword>
<keyword id="KW-0472">Membrane</keyword>
<keyword id="KW-0597">Phosphoprotein</keyword>
<keyword id="KW-1185">Reference proteome</keyword>
<keyword id="KW-0926">Vacuole</keyword>
<sequence length="799" mass="88845">MVHRGRTLKSDTDVTSLNASTVSHQSKPFRQFSTRSRAKSNASFKGLRRVLTHDGTLDNDYFNKHNVSQKCKSSDALFRKRTISGLNMTALTRVKSNQGKRSASFHSPVHNTLLSPKNSSHSNTGTAGFGLKPRRSKSTQSVLSLRDAQESKKSESTTDEEVECFSEDNIEDGKVNNDKVIAEHVMPEEKKNVQQLNQNELQSPDSIDEQEEDKSGTDGKENHRAVSLPLPHLSSNNYFGESSHSIEHQKDGETSPSSIETKLNATSVINEEGQSKVTKEADIDDLSSHSQNLRASLVKAGDNISEAPYDKEKKILDVGNTLAAHKSNQKPSHSDEQFDQEDHIDAPRSNSSRKSDSSFMSLRRQSSKQHKLLNEEEDLIKPDDISSAGTKDIEGHSLLENYAPNMILSQSTGVERRFENSSSIQNSLGNEIHDSGEHMASGDTFNELDDGKLRKSKKNGGRSQLGQNIPNSQSTFPTIANIGSKDNNVPQHNFSTSISSLTNNLRRAAPESFHGSRMNNIFHKKGNQNLLLRSNDLNKNSAAPASPLSNEHITSSTNSGSDANRQSNSGAKFNSFAQFLKSDGIDAESRTQRKLWLQRENSIMDLSSQNDGSDSIFMAGNIDAKREFERISHEYSNVKRFYNPLDEALLRVQPIITGNANNIRKKSHNDAQSIAHSSSDTDHKDEDDLLFTNYDKKFDDLYPHLASAKIQAVLSGIWKSESYLFNKDVNPINKNRTTSTNHSVGHTASQNARNLLRGPMGSSTTLHHQRVINSLQPTTRAVNRRMENVGYMHTQPQQR</sequence>
<organism>
    <name type="scientific">Saccharomyces cerevisiae (strain ATCC 204508 / S288c)</name>
    <name type="common">Baker's yeast</name>
    <dbReference type="NCBI Taxonomy" id="559292"/>
    <lineage>
        <taxon>Eukaryota</taxon>
        <taxon>Fungi</taxon>
        <taxon>Dikarya</taxon>
        <taxon>Ascomycota</taxon>
        <taxon>Saccharomycotina</taxon>
        <taxon>Saccharomycetes</taxon>
        <taxon>Saccharomycetales</taxon>
        <taxon>Saccharomycetaceae</taxon>
        <taxon>Saccharomyces</taxon>
    </lineage>
</organism>
<gene>
    <name type="primary">TCO89</name>
    <name type="ordered locus">YPL180W</name>
</gene>
<accession>Q08921</accession>
<accession>D6W3I8</accession>
<feature type="chain" id="PRO_0000271786" description="Target of rapamycin complex 1 subunit TCO89">
    <location>
        <begin position="1"/>
        <end position="799"/>
    </location>
</feature>
<feature type="region of interest" description="Disordered" evidence="1">
    <location>
        <begin position="18"/>
        <end position="41"/>
    </location>
</feature>
<feature type="region of interest" description="Disordered" evidence="1">
    <location>
        <begin position="97"/>
        <end position="171"/>
    </location>
</feature>
<feature type="region of interest" description="Disordered" evidence="1">
    <location>
        <begin position="201"/>
        <end position="284"/>
    </location>
</feature>
<feature type="region of interest" description="Disordered" evidence="1">
    <location>
        <begin position="324"/>
        <end position="391"/>
    </location>
</feature>
<feature type="region of interest" description="Disordered" evidence="1">
    <location>
        <begin position="418"/>
        <end position="476"/>
    </location>
</feature>
<feature type="region of interest" description="Disordered" evidence="1">
    <location>
        <begin position="538"/>
        <end position="568"/>
    </location>
</feature>
<feature type="region of interest" description="Disordered" evidence="1">
    <location>
        <begin position="663"/>
        <end position="685"/>
    </location>
</feature>
<feature type="compositionally biased region" description="Polar residues" evidence="1">
    <location>
        <begin position="97"/>
        <end position="126"/>
    </location>
</feature>
<feature type="compositionally biased region" description="Basic and acidic residues" evidence="1">
    <location>
        <begin position="147"/>
        <end position="156"/>
    </location>
</feature>
<feature type="compositionally biased region" description="Acidic residues" evidence="1">
    <location>
        <begin position="157"/>
        <end position="170"/>
    </location>
</feature>
<feature type="compositionally biased region" description="Basic and acidic residues" evidence="1">
    <location>
        <begin position="213"/>
        <end position="224"/>
    </location>
</feature>
<feature type="compositionally biased region" description="Polar residues" evidence="1">
    <location>
        <begin position="233"/>
        <end position="243"/>
    </location>
</feature>
<feature type="compositionally biased region" description="Basic and acidic residues" evidence="1">
    <location>
        <begin position="244"/>
        <end position="253"/>
    </location>
</feature>
<feature type="compositionally biased region" description="Polar residues" evidence="1">
    <location>
        <begin position="254"/>
        <end position="269"/>
    </location>
</feature>
<feature type="compositionally biased region" description="Basic and acidic residues" evidence="1">
    <location>
        <begin position="332"/>
        <end position="346"/>
    </location>
</feature>
<feature type="compositionally biased region" description="Low complexity" evidence="1">
    <location>
        <begin position="348"/>
        <end position="363"/>
    </location>
</feature>
<feature type="compositionally biased region" description="Polar residues" evidence="1">
    <location>
        <begin position="420"/>
        <end position="429"/>
    </location>
</feature>
<feature type="compositionally biased region" description="Polar residues" evidence="1">
    <location>
        <begin position="461"/>
        <end position="476"/>
    </location>
</feature>
<feature type="modified residue" description="Phosphothreonine" evidence="9 10">
    <location>
        <position position="52"/>
    </location>
</feature>
<feature type="modified residue" description="Phosphothreonine" evidence="10">
    <location>
        <position position="82"/>
    </location>
</feature>
<feature type="modified residue" description="Phosphoserine" evidence="10">
    <location>
        <position position="84"/>
    </location>
</feature>
<feature type="modified residue" description="Phosphoserine" evidence="7">
    <location>
        <position position="104"/>
    </location>
</feature>
<feature type="modified residue" description="Phosphoserine" evidence="8 9">
    <location>
        <position position="107"/>
    </location>
</feature>
<feature type="modified residue" description="Phosphoserine" evidence="10">
    <location>
        <position position="115"/>
    </location>
</feature>
<feature type="modified residue" description="Phosphoserine" evidence="9">
    <location>
        <position position="144"/>
    </location>
</feature>
<feature type="modified residue" description="Phosphoserine" evidence="10">
    <location>
        <position position="203"/>
    </location>
</feature>
<feature type="modified residue" description="Phosphoserine" evidence="10">
    <location>
        <position position="215"/>
    </location>
</feature>
<feature type="modified residue" description="Phosphoserine" evidence="10">
    <location>
        <position position="290"/>
    </location>
</feature>
<feature type="modified residue" description="Phosphoserine" evidence="10">
    <location>
        <position position="397"/>
    </location>
</feature>
<feature type="modified residue" description="Phosphoserine" evidence="10">
    <location>
        <position position="575"/>
    </location>
</feature>
<feature type="modified residue" description="Phosphoserine" evidence="9">
    <location>
        <position position="707"/>
    </location>
</feature>
<proteinExistence type="evidence at protein level"/>
<reference key="1">
    <citation type="journal article" date="1997" name="Nature">
        <title>The nucleotide sequence of Saccharomyces cerevisiae chromosome XVI.</title>
        <authorList>
            <person name="Bussey H."/>
            <person name="Storms R.K."/>
            <person name="Ahmed A."/>
            <person name="Albermann K."/>
            <person name="Allen E."/>
            <person name="Ansorge W."/>
            <person name="Araujo R."/>
            <person name="Aparicio A."/>
            <person name="Barrell B.G."/>
            <person name="Badcock K."/>
            <person name="Benes V."/>
            <person name="Botstein D."/>
            <person name="Bowman S."/>
            <person name="Brueckner M."/>
            <person name="Carpenter J."/>
            <person name="Cherry J.M."/>
            <person name="Chung E."/>
            <person name="Churcher C.M."/>
            <person name="Coster F."/>
            <person name="Davis K."/>
            <person name="Davis R.W."/>
            <person name="Dietrich F.S."/>
            <person name="Delius H."/>
            <person name="DiPaolo T."/>
            <person name="Dubois E."/>
            <person name="Duesterhoeft A."/>
            <person name="Duncan M."/>
            <person name="Floeth M."/>
            <person name="Fortin N."/>
            <person name="Friesen J.D."/>
            <person name="Fritz C."/>
            <person name="Goffeau A."/>
            <person name="Hall J."/>
            <person name="Hebling U."/>
            <person name="Heumann K."/>
            <person name="Hilbert H."/>
            <person name="Hillier L.W."/>
            <person name="Hunicke-Smith S."/>
            <person name="Hyman R.W."/>
            <person name="Johnston M."/>
            <person name="Kalman S."/>
            <person name="Kleine K."/>
            <person name="Komp C."/>
            <person name="Kurdi O."/>
            <person name="Lashkari D."/>
            <person name="Lew H."/>
            <person name="Lin A."/>
            <person name="Lin D."/>
            <person name="Louis E.J."/>
            <person name="Marathe R."/>
            <person name="Messenguy F."/>
            <person name="Mewes H.-W."/>
            <person name="Mirtipati S."/>
            <person name="Moestl D."/>
            <person name="Mueller-Auer S."/>
            <person name="Namath A."/>
            <person name="Nentwich U."/>
            <person name="Oefner P."/>
            <person name="Pearson D."/>
            <person name="Petel F.X."/>
            <person name="Pohl T.M."/>
            <person name="Purnelle B."/>
            <person name="Rajandream M.A."/>
            <person name="Rechmann S."/>
            <person name="Rieger M."/>
            <person name="Riles L."/>
            <person name="Roberts D."/>
            <person name="Schaefer M."/>
            <person name="Scharfe M."/>
            <person name="Scherens B."/>
            <person name="Schramm S."/>
            <person name="Schroeder M."/>
            <person name="Sdicu A.-M."/>
            <person name="Tettelin H."/>
            <person name="Urrestarazu L.A."/>
            <person name="Ushinsky S."/>
            <person name="Vierendeels F."/>
            <person name="Vissers S."/>
            <person name="Voss H."/>
            <person name="Walsh S.V."/>
            <person name="Wambutt R."/>
            <person name="Wang Y."/>
            <person name="Wedler E."/>
            <person name="Wedler H."/>
            <person name="Winnett E."/>
            <person name="Zhong W.-W."/>
            <person name="Zollner A."/>
            <person name="Vo D.H."/>
            <person name="Hani J."/>
        </authorList>
    </citation>
    <scope>NUCLEOTIDE SEQUENCE [LARGE SCALE GENOMIC DNA]</scope>
    <source>
        <strain>ATCC 204508 / S288c</strain>
    </source>
</reference>
<reference key="2">
    <citation type="journal article" date="2014" name="G3 (Bethesda)">
        <title>The reference genome sequence of Saccharomyces cerevisiae: Then and now.</title>
        <authorList>
            <person name="Engel S.R."/>
            <person name="Dietrich F.S."/>
            <person name="Fisk D.G."/>
            <person name="Binkley G."/>
            <person name="Balakrishnan R."/>
            <person name="Costanzo M.C."/>
            <person name="Dwight S.S."/>
            <person name="Hitz B.C."/>
            <person name="Karra K."/>
            <person name="Nash R.S."/>
            <person name="Weng S."/>
            <person name="Wong E.D."/>
            <person name="Lloyd P."/>
            <person name="Skrzypek M.S."/>
            <person name="Miyasato S.R."/>
            <person name="Simison M."/>
            <person name="Cherry J.M."/>
        </authorList>
    </citation>
    <scope>GENOME REANNOTATION</scope>
    <source>
        <strain>ATCC 204508 / S288c</strain>
    </source>
</reference>
<reference key="3">
    <citation type="journal article" date="2003" name="Nature">
        <title>Global analysis of protein localization in budding yeast.</title>
        <authorList>
            <person name="Huh W.-K."/>
            <person name="Falvo J.V."/>
            <person name="Gerke L.C."/>
            <person name="Carroll A.S."/>
            <person name="Howson R.W."/>
            <person name="Weissman J.S."/>
            <person name="O'Shea E.K."/>
        </authorList>
    </citation>
    <scope>SUBCELLULAR LOCATION [LARGE SCALE ANALYSIS]</scope>
</reference>
<reference key="4">
    <citation type="journal article" date="2003" name="Nature">
        <title>Global analysis of protein expression in yeast.</title>
        <authorList>
            <person name="Ghaemmaghami S."/>
            <person name="Huh W.-K."/>
            <person name="Bower K."/>
            <person name="Howson R.W."/>
            <person name="Belle A."/>
            <person name="Dephoure N."/>
            <person name="O'Shea E.K."/>
            <person name="Weissman J.S."/>
        </authorList>
    </citation>
    <scope>LEVEL OF PROTEIN EXPRESSION [LARGE SCALE ANALYSIS]</scope>
</reference>
<reference key="5">
    <citation type="journal article" date="2004" name="J. Biol. Chem.">
        <title>TOR complex 1 includes a novel component, Tco89p (YPL180w), and cooperates with Ssd1p to maintain cellular integrity in Saccharomyces cerevisiae.</title>
        <authorList>
            <person name="Reinke A."/>
            <person name="Anderson S."/>
            <person name="McCaffery J.M."/>
            <person name="Yates J.R. III"/>
            <person name="Aronova S."/>
            <person name="Chu S."/>
            <person name="Fairclough S."/>
            <person name="Iverson C."/>
            <person name="Wedaman K.P."/>
            <person name="Powers T."/>
        </authorList>
    </citation>
    <scope>FUNCTION</scope>
    <scope>IDENTIFICATION IN TORC1</scope>
    <scope>IDENTIFICATION BY MASS SPECTROMETRY</scope>
    <scope>SUBCELLULAR LOCATION</scope>
</reference>
<reference key="6">
    <citation type="journal article" date="2007" name="J. Proteome Res.">
        <title>Large-scale phosphorylation analysis of alpha-factor-arrested Saccharomyces cerevisiae.</title>
        <authorList>
            <person name="Li X."/>
            <person name="Gerber S.A."/>
            <person name="Rudner A.D."/>
            <person name="Beausoleil S.A."/>
            <person name="Haas W."/>
            <person name="Villen J."/>
            <person name="Elias J.E."/>
            <person name="Gygi S.P."/>
        </authorList>
    </citation>
    <scope>PHOSPHORYLATION [LARGE SCALE ANALYSIS] AT SER-107</scope>
    <scope>IDENTIFICATION BY MASS SPECTROMETRY [LARGE SCALE ANALYSIS]</scope>
    <source>
        <strain>ADR376</strain>
    </source>
</reference>
<reference key="7">
    <citation type="journal article" date="2007" name="Proc. Natl. Acad. Sci. U.S.A.">
        <title>Analysis of phosphorylation sites on proteins from Saccharomyces cerevisiae by electron transfer dissociation (ETD) mass spectrometry.</title>
        <authorList>
            <person name="Chi A."/>
            <person name="Huttenhower C."/>
            <person name="Geer L.Y."/>
            <person name="Coon J.J."/>
            <person name="Syka J.E.P."/>
            <person name="Bai D.L."/>
            <person name="Shabanowitz J."/>
            <person name="Burke D.J."/>
            <person name="Troyanskaya O.G."/>
            <person name="Hunt D.F."/>
        </authorList>
    </citation>
    <scope>PHOSPHORYLATION [LARGE SCALE ANALYSIS] AT SER-104</scope>
    <scope>IDENTIFICATION BY MASS SPECTROMETRY [LARGE SCALE ANALYSIS]</scope>
</reference>
<reference key="8">
    <citation type="journal article" date="2008" name="Mol. Cell. Proteomics">
        <title>A multidimensional chromatography technology for in-depth phosphoproteome analysis.</title>
        <authorList>
            <person name="Albuquerque C.P."/>
            <person name="Smolka M.B."/>
            <person name="Payne S.H."/>
            <person name="Bafna V."/>
            <person name="Eng J."/>
            <person name="Zhou H."/>
        </authorList>
    </citation>
    <scope>PHOSPHORYLATION [LARGE SCALE ANALYSIS] AT THR-52; SER-107; SER-144 AND SER-707</scope>
    <scope>IDENTIFICATION BY MASS SPECTROMETRY [LARGE SCALE ANALYSIS]</scope>
</reference>
<reference key="9">
    <citation type="journal article" date="2009" name="Science">
        <title>Global analysis of Cdk1 substrate phosphorylation sites provides insights into evolution.</title>
        <authorList>
            <person name="Holt L.J."/>
            <person name="Tuch B.B."/>
            <person name="Villen J."/>
            <person name="Johnson A.D."/>
            <person name="Gygi S.P."/>
            <person name="Morgan D.O."/>
        </authorList>
    </citation>
    <scope>PHOSPHORYLATION [LARGE SCALE ANALYSIS] AT THR-52; THR-82; SER-84; SER-115; SER-203; SER-215; SER-290; SER-397 AND SER-575</scope>
    <scope>IDENTIFICATION BY MASS SPECTROMETRY [LARGE SCALE ANALYSIS]</scope>
</reference>
<reference key="10">
    <citation type="journal article" date="2018" name="PLoS Genet.">
        <title>Gtr/Ego-independent TORC1 activation is achieved through a glutamine-sensitive interaction with Pib2 on the vacuolar membrane.</title>
        <authorList>
            <person name="Ukai H."/>
            <person name="Araki Y."/>
            <person name="Kira S."/>
            <person name="Oikawa Y."/>
            <person name="May A.I."/>
            <person name="Noda T."/>
        </authorList>
    </citation>
    <scope>INTERACTION WITH PIB2</scope>
    <scope>IDENTIFICATION BY MASS SPECTROMETRY</scope>
</reference>
<reference key="11">
    <citation type="journal article" date="2020" name="J. Cell Sci.">
        <title>Amino acid homeostatic control by TORC1 in Saccharomyces cerevisiae under high hydrostatic pressure.</title>
        <authorList>
            <person name="Uemura S."/>
            <person name="Mochizuki T."/>
            <person name="Amemiya K."/>
            <person name="Kurosaka G."/>
            <person name="Yazawa M."/>
            <person name="Nakamoto K."/>
            <person name="Ishikawa Y."/>
            <person name="Izawa S."/>
            <person name="Abe F."/>
        </authorList>
    </citation>
    <scope>DISRUPTION PHENOTYPE</scope>
</reference>
<evidence type="ECO:0000256" key="1">
    <source>
        <dbReference type="SAM" id="MobiDB-lite"/>
    </source>
</evidence>
<evidence type="ECO:0000269" key="2">
    <source>
    </source>
</evidence>
<evidence type="ECO:0000269" key="3">
    <source>
    </source>
</evidence>
<evidence type="ECO:0000269" key="4">
    <source>
    </source>
</evidence>
<evidence type="ECO:0000269" key="5">
    <source>
    </source>
</evidence>
<evidence type="ECO:0000305" key="6"/>
<evidence type="ECO:0007744" key="7">
    <source>
    </source>
</evidence>
<evidence type="ECO:0007744" key="8">
    <source>
    </source>
</evidence>
<evidence type="ECO:0007744" key="9">
    <source>
    </source>
</evidence>
<evidence type="ECO:0007744" key="10">
    <source>
    </source>
</evidence>
<comment type="function">
    <text evidence="3">Component of TORC1, which regulates multiple cellular processes to control cell growth in response to environmental signals. Nutrient limitation and environmental stress signals cause inactivation of TORC1. Active TORC1 positively controls ribosome biogenesis via control of rRNA, ribosomal protein and tRNA gene expression, and rRNA processing. TORC1 positively controls protein biosynthesis by regulation of mRNA stability, translation initiation factor activity, and high-affinity amino acid permeases that serve to provide amino acids for use by the translation machinery. TORC1 also promotes growth by sequestering a number of nutrient and general stress-responsive transcription factors in the cytoplasm. TORC1 negatively controls macroautophagy, a process to recycle surplus cytoplasmic mass under nutrient starvation conditions.</text>
</comment>
<comment type="subunit">
    <text evidence="3 4">The target of rapamycin complex 1 (TORC1) is composed of at least KOG1, LST8, TCO89 and either TOR1 (TORC1-A) or TOR2 (TORC1-B) (PubMed:14736892). Interacts with PIB2; following activation of PIB2 by glutamine or cysteine (PubMed:29698392). TORC1 binds to and is inhibited by FKBP-rapamycin (PubMed:14736892).</text>
</comment>
<comment type="interaction">
    <interactant intactId="EBI-37395">
        <id>Q08921</id>
    </interactant>
    <interactant intactId="EBI-11850">
        <id>P25293</id>
        <label>NAP1</label>
    </interactant>
    <organismsDiffer>false</organismsDiffer>
    <experiments>3</experiments>
</comment>
<comment type="interaction">
    <interactant intactId="EBI-37395">
        <id>Q08921</id>
    </interactant>
    <interactant intactId="EBI-19374">
        <id>P35169</id>
        <label>TOR1</label>
    </interactant>
    <organismsDiffer>false</organismsDiffer>
    <experiments>4</experiments>
</comment>
<comment type="subcellular location">
    <subcellularLocation>
        <location>Cell membrane</location>
        <topology>Peripheral membrane protein</topology>
        <orientation>Cytoplasmic side</orientation>
    </subcellularLocation>
    <subcellularLocation>
        <location>Vacuole membrane</location>
        <topology>Peripheral membrane protein</topology>
        <orientation>Cytoplasmic side</orientation>
    </subcellularLocation>
    <text>Also localizes to membranous structures both proximal to, yet distinct from, the plasma membrane as well as within the cell interior, probably endosomal or Golgi membranes.</text>
</comment>
<comment type="disruption phenotype">
    <text evidence="5">Abnormal activation of TORC1 signaling (PubMed:32801125). Abnormal punctate localization of TOR1 (PubMed:32801125). Sensitive to high hydrostatic pressure (mechanical stress) (PubMed:32801125).</text>
</comment>
<comment type="miscellaneous">
    <text evidence="2">Present with 243 molecules/cell in log phase SD medium.</text>
</comment>
<comment type="similarity">
    <text evidence="6">Belongs to the TORC subunit TCO89 family.</text>
</comment>
<name>TCO89_YEAST</name>